<keyword id="KW-0406">Ion transport</keyword>
<keyword id="KW-0472">Membrane</keyword>
<keyword id="KW-1185">Reference proteome</keyword>
<keyword id="KW-0732">Signal</keyword>
<keyword id="KW-0812">Transmembrane</keyword>
<keyword id="KW-1133">Transmembrane helix</keyword>
<keyword id="KW-0813">Transport</keyword>
<keyword id="KW-0926">Vacuole</keyword>
<reference key="1">
    <citation type="journal article" date="1997" name="Nature">
        <title>The nucleotide sequence of Saccharomyces cerevisiae chromosome IV.</title>
        <authorList>
            <person name="Jacq C."/>
            <person name="Alt-Moerbe J."/>
            <person name="Andre B."/>
            <person name="Arnold W."/>
            <person name="Bahr A."/>
            <person name="Ballesta J.P.G."/>
            <person name="Bargues M."/>
            <person name="Baron L."/>
            <person name="Becker A."/>
            <person name="Biteau N."/>
            <person name="Bloecker H."/>
            <person name="Blugeon C."/>
            <person name="Boskovic J."/>
            <person name="Brandt P."/>
            <person name="Brueckner M."/>
            <person name="Buitrago M.J."/>
            <person name="Coster F."/>
            <person name="Delaveau T."/>
            <person name="del Rey F."/>
            <person name="Dujon B."/>
            <person name="Eide L.G."/>
            <person name="Garcia-Cantalejo J.M."/>
            <person name="Goffeau A."/>
            <person name="Gomez-Peris A."/>
            <person name="Granotier C."/>
            <person name="Hanemann V."/>
            <person name="Hankeln T."/>
            <person name="Hoheisel J.D."/>
            <person name="Jaeger W."/>
            <person name="Jimenez A."/>
            <person name="Jonniaux J.-L."/>
            <person name="Kraemer C."/>
            <person name="Kuester H."/>
            <person name="Laamanen P."/>
            <person name="Legros Y."/>
            <person name="Louis E.J."/>
            <person name="Moeller-Rieker S."/>
            <person name="Monnet A."/>
            <person name="Moro M."/>
            <person name="Mueller-Auer S."/>
            <person name="Nussbaumer B."/>
            <person name="Paricio N."/>
            <person name="Paulin L."/>
            <person name="Perea J."/>
            <person name="Perez-Alonso M."/>
            <person name="Perez-Ortin J.E."/>
            <person name="Pohl T.M."/>
            <person name="Prydz H."/>
            <person name="Purnelle B."/>
            <person name="Rasmussen S.W."/>
            <person name="Remacha M.A."/>
            <person name="Revuelta J.L."/>
            <person name="Rieger M."/>
            <person name="Salom D."/>
            <person name="Saluz H.P."/>
            <person name="Saiz J.E."/>
            <person name="Saren A.-M."/>
            <person name="Schaefer M."/>
            <person name="Scharfe M."/>
            <person name="Schmidt E.R."/>
            <person name="Schneider C."/>
            <person name="Scholler P."/>
            <person name="Schwarz S."/>
            <person name="Soler-Mira A."/>
            <person name="Urrestarazu L.A."/>
            <person name="Verhasselt P."/>
            <person name="Vissers S."/>
            <person name="Voet M."/>
            <person name="Volckaert G."/>
            <person name="Wagner G."/>
            <person name="Wambutt R."/>
            <person name="Wedler E."/>
            <person name="Wedler H."/>
            <person name="Woelfl S."/>
            <person name="Harris D.E."/>
            <person name="Bowman S."/>
            <person name="Brown D."/>
            <person name="Churcher C.M."/>
            <person name="Connor R."/>
            <person name="Dedman K."/>
            <person name="Gentles S."/>
            <person name="Hamlin N."/>
            <person name="Hunt S."/>
            <person name="Jones L."/>
            <person name="McDonald S."/>
            <person name="Murphy L.D."/>
            <person name="Niblett D."/>
            <person name="Odell C."/>
            <person name="Oliver K."/>
            <person name="Rajandream M.A."/>
            <person name="Richards C."/>
            <person name="Shore L."/>
            <person name="Walsh S.V."/>
            <person name="Barrell B.G."/>
            <person name="Dietrich F.S."/>
            <person name="Mulligan J.T."/>
            <person name="Allen E."/>
            <person name="Araujo R."/>
            <person name="Aviles E."/>
            <person name="Berno A."/>
            <person name="Carpenter J."/>
            <person name="Chen E."/>
            <person name="Cherry J.M."/>
            <person name="Chung E."/>
            <person name="Duncan M."/>
            <person name="Hunicke-Smith S."/>
            <person name="Hyman R.W."/>
            <person name="Komp C."/>
            <person name="Lashkari D."/>
            <person name="Lew H."/>
            <person name="Lin D."/>
            <person name="Mosedale D."/>
            <person name="Nakahara K."/>
            <person name="Namath A."/>
            <person name="Oefner P."/>
            <person name="Oh C."/>
            <person name="Petel F.X."/>
            <person name="Roberts D."/>
            <person name="Schramm S."/>
            <person name="Schroeder M."/>
            <person name="Shogren T."/>
            <person name="Shroff N."/>
            <person name="Winant A."/>
            <person name="Yelton M.A."/>
            <person name="Botstein D."/>
            <person name="Davis R.W."/>
            <person name="Johnston M."/>
            <person name="Andrews S."/>
            <person name="Brinkman R."/>
            <person name="Cooper J."/>
            <person name="Ding H."/>
            <person name="Du Z."/>
            <person name="Favello A."/>
            <person name="Fulton L."/>
            <person name="Gattung S."/>
            <person name="Greco T."/>
            <person name="Hallsworth K."/>
            <person name="Hawkins J."/>
            <person name="Hillier L.W."/>
            <person name="Jier M."/>
            <person name="Johnson D."/>
            <person name="Johnston L."/>
            <person name="Kirsten J."/>
            <person name="Kucaba T."/>
            <person name="Langston Y."/>
            <person name="Latreille P."/>
            <person name="Le T."/>
            <person name="Mardis E."/>
            <person name="Menezes S."/>
            <person name="Miller N."/>
            <person name="Nhan M."/>
            <person name="Pauley A."/>
            <person name="Peluso D."/>
            <person name="Rifkin L."/>
            <person name="Riles L."/>
            <person name="Taich A."/>
            <person name="Trevaskis E."/>
            <person name="Vignati D."/>
            <person name="Wilcox L."/>
            <person name="Wohldman P."/>
            <person name="Vaudin M."/>
            <person name="Wilson R."/>
            <person name="Waterston R."/>
            <person name="Albermann K."/>
            <person name="Hani J."/>
            <person name="Heumann K."/>
            <person name="Kleine K."/>
            <person name="Mewes H.-W."/>
            <person name="Zollner A."/>
            <person name="Zaccaria P."/>
        </authorList>
    </citation>
    <scope>NUCLEOTIDE SEQUENCE [LARGE SCALE GENOMIC DNA]</scope>
    <source>
        <strain>ATCC 204508 / S288c</strain>
    </source>
</reference>
<reference key="2">
    <citation type="journal article" date="2014" name="G3 (Bethesda)">
        <title>The reference genome sequence of Saccharomyces cerevisiae: Then and now.</title>
        <authorList>
            <person name="Engel S.R."/>
            <person name="Dietrich F.S."/>
            <person name="Fisk D.G."/>
            <person name="Binkley G."/>
            <person name="Balakrishnan R."/>
            <person name="Costanzo M.C."/>
            <person name="Dwight S.S."/>
            <person name="Hitz B.C."/>
            <person name="Karra K."/>
            <person name="Nash R.S."/>
            <person name="Weng S."/>
            <person name="Wong E.D."/>
            <person name="Lloyd P."/>
            <person name="Skrzypek M.S."/>
            <person name="Miyasato S.R."/>
            <person name="Simison M."/>
            <person name="Cherry J.M."/>
        </authorList>
    </citation>
    <scope>GENOME REANNOTATION</scope>
    <source>
        <strain>ATCC 204508 / S288c</strain>
    </source>
</reference>
<reference key="3">
    <citation type="journal article" date="2006" name="Proc. Natl. Acad. Sci. U.S.A.">
        <title>A global topology map of the Saccharomyces cerevisiae membrane proteome.</title>
        <authorList>
            <person name="Kim H."/>
            <person name="Melen K."/>
            <person name="Oesterberg M."/>
            <person name="von Heijne G."/>
        </authorList>
    </citation>
    <scope>TOPOLOGY [LARGE SCALE ANALYSIS]</scope>
    <source>
        <strain>ATCC 208353 / W303-1A</strain>
    </source>
</reference>
<reference key="4">
    <citation type="journal article" date="2008" name="J. Biol. Chem.">
        <title>Control of cellular physiology by TM9 proteins in yeast and Dictyostelium.</title>
        <authorList>
            <person name="Froquet R."/>
            <person name="Cherix N."/>
            <person name="Birke R."/>
            <person name="Benghezal M."/>
            <person name="Cameroni E."/>
            <person name="Letourneur F."/>
            <person name="Moesch H.-U."/>
            <person name="De Virgilio C."/>
            <person name="Cosson P."/>
        </authorList>
    </citation>
    <scope>FUNCTION</scope>
</reference>
<reference key="5">
    <citation type="journal article" date="2010" name="Physiol. Plantarum">
        <title>Transmembrane nine proteins in yeast and Arabidopsis affect cellular metal contents without changing vacuolar morphology.</title>
        <authorList>
            <person name="Hegelund J.N."/>
            <person name="Jahn T.P."/>
            <person name="Baekgaard L."/>
            <person name="Palmgren M.G."/>
            <person name="Schjoerring J.K."/>
        </authorList>
    </citation>
    <scope>FUNCTION</scope>
    <scope>SUBCELLULAR LOCATION</scope>
</reference>
<evidence type="ECO:0000255" key="1"/>
<evidence type="ECO:0000269" key="2">
    <source>
    </source>
</evidence>
<evidence type="ECO:0000269" key="3">
    <source>
    </source>
</evidence>
<evidence type="ECO:0000305" key="4"/>
<gene>
    <name type="primary">TMN2</name>
    <name type="ordered locus">YDR107C</name>
</gene>
<dbReference type="EMBL" id="Z48758">
    <property type="protein sequence ID" value="CAA88661.1"/>
    <property type="molecule type" value="Genomic_DNA"/>
</dbReference>
<dbReference type="EMBL" id="BK006938">
    <property type="protein sequence ID" value="DAA11953.1"/>
    <property type="molecule type" value="Genomic_DNA"/>
</dbReference>
<dbReference type="PIR" id="S52673">
    <property type="entry name" value="S52673"/>
</dbReference>
<dbReference type="RefSeq" id="NP_010392.1">
    <property type="nucleotide sequence ID" value="NM_001180415.1"/>
</dbReference>
<dbReference type="BioGRID" id="32165">
    <property type="interactions" value="62"/>
</dbReference>
<dbReference type="DIP" id="DIP-4247N"/>
<dbReference type="FunCoup" id="Q04562">
    <property type="interactions" value="956"/>
</dbReference>
<dbReference type="IntAct" id="Q04562">
    <property type="interactions" value="9"/>
</dbReference>
<dbReference type="MINT" id="Q04562"/>
<dbReference type="STRING" id="4932.YDR107C"/>
<dbReference type="iPTMnet" id="Q04562"/>
<dbReference type="PaxDb" id="4932-YDR107C"/>
<dbReference type="PeptideAtlas" id="Q04562"/>
<dbReference type="EnsemblFungi" id="YDR107C_mRNA">
    <property type="protein sequence ID" value="YDR107C"/>
    <property type="gene ID" value="YDR107C"/>
</dbReference>
<dbReference type="GeneID" id="851685"/>
<dbReference type="KEGG" id="sce:YDR107C"/>
<dbReference type="AGR" id="SGD:S000002514"/>
<dbReference type="SGD" id="S000002514">
    <property type="gene designation" value="TMN2"/>
</dbReference>
<dbReference type="VEuPathDB" id="FungiDB:YDR107C"/>
<dbReference type="eggNOG" id="KOG1278">
    <property type="taxonomic scope" value="Eukaryota"/>
</dbReference>
<dbReference type="GeneTree" id="ENSGT00940000172441"/>
<dbReference type="HOGENOM" id="CLU_010714_4_1_1"/>
<dbReference type="InParanoid" id="Q04562"/>
<dbReference type="OMA" id="KVYYMFG"/>
<dbReference type="OrthoDB" id="1666796at2759"/>
<dbReference type="BioCyc" id="YEAST:G3O-29709-MONOMER"/>
<dbReference type="BioGRID-ORCS" id="851685">
    <property type="hits" value="0 hits in 10 CRISPR screens"/>
</dbReference>
<dbReference type="PRO" id="PR:Q04562"/>
<dbReference type="Proteomes" id="UP000002311">
    <property type="component" value="Chromosome IV"/>
</dbReference>
<dbReference type="RNAct" id="Q04562">
    <property type="molecule type" value="protein"/>
</dbReference>
<dbReference type="GO" id="GO:0005768">
    <property type="term" value="C:endosome"/>
    <property type="evidence" value="ECO:0000318"/>
    <property type="project" value="GO_Central"/>
</dbReference>
<dbReference type="GO" id="GO:0000329">
    <property type="term" value="C:fungal-type vacuole membrane"/>
    <property type="evidence" value="ECO:0000314"/>
    <property type="project" value="SGD"/>
</dbReference>
<dbReference type="GO" id="GO:0006878">
    <property type="term" value="P:intracellular copper ion homeostasis"/>
    <property type="evidence" value="ECO:0000314"/>
    <property type="project" value="UniProtKB"/>
</dbReference>
<dbReference type="GO" id="GO:0001403">
    <property type="term" value="P:invasive growth in response to glucose limitation"/>
    <property type="evidence" value="ECO:0000315"/>
    <property type="project" value="SGD"/>
</dbReference>
<dbReference type="GO" id="GO:0006811">
    <property type="term" value="P:monoatomic ion transport"/>
    <property type="evidence" value="ECO:0007669"/>
    <property type="project" value="UniProtKB-KW"/>
</dbReference>
<dbReference type="GO" id="GO:0072657">
    <property type="term" value="P:protein localization to membrane"/>
    <property type="evidence" value="ECO:0000318"/>
    <property type="project" value="GO_Central"/>
</dbReference>
<dbReference type="GO" id="GO:0007124">
    <property type="term" value="P:pseudohyphal growth"/>
    <property type="evidence" value="ECO:0000316"/>
    <property type="project" value="SGD"/>
</dbReference>
<dbReference type="GO" id="GO:0007034">
    <property type="term" value="P:vacuolar transport"/>
    <property type="evidence" value="ECO:0000316"/>
    <property type="project" value="SGD"/>
</dbReference>
<dbReference type="InterPro" id="IPR004240">
    <property type="entry name" value="EMP70"/>
</dbReference>
<dbReference type="PANTHER" id="PTHR10766:SF111">
    <property type="entry name" value="TRANSMEMBRANE 9 SUPERFAMILY MEMBER 2"/>
    <property type="match status" value="1"/>
</dbReference>
<dbReference type="PANTHER" id="PTHR10766">
    <property type="entry name" value="TRANSMEMBRANE 9 SUPERFAMILY PROTEIN"/>
    <property type="match status" value="1"/>
</dbReference>
<dbReference type="Pfam" id="PF02990">
    <property type="entry name" value="EMP70"/>
    <property type="match status" value="1"/>
</dbReference>
<comment type="function">
    <text evidence="2 3">With EMP70 and TMN3, plays a critical role in the late stages of a nutrient-controlled pathway notably regulating FLO11 gene expression. Acts downstream of RAS2 and TOR. Essential for cell adhesion and filamentous growth. May play a role as effector of cellular copper homeostasis.</text>
</comment>
<comment type="subcellular location">
    <subcellularLocation>
        <location>Vacuole membrane</location>
        <topology>Multi-pass membrane protein</topology>
    </subcellularLocation>
</comment>
<comment type="similarity">
    <text evidence="4">Belongs to the nonaspanin (TM9SF) (TC 9.A.2) family.</text>
</comment>
<accession>Q04562</accession>
<accession>D6VS93</accession>
<name>TMN2_YEAST</name>
<proteinExistence type="evidence at protein level"/>
<protein>
    <recommendedName>
        <fullName>Transmembrane 9 superfamily member 2</fullName>
    </recommendedName>
</protein>
<sequence>MKRGVWLLIYCYATLTKGFSLPGLSPTTYHSGDEIPLLVNRLTPSIYFQHQDEEGNDVSGDKEHFLYSYDYYNKRFHFCRPEHVEKQPESLGSVIFGDRIYNSPFQLNMLEEKECVALCKSTIPGKDAKFINTLIKSGFFQNWLVDGLPAARKAYDSRTKTNYYGTGFELGFTDVKQTVDGKAVPSTMEELTSEASNEDVILDARLPKNVKPNLVKTVELPYFVNHFDIEVEFHDRGNDNYRVVGVIVNPVSIERSSPGACSTTGKPLILDEDKDNEVYFTYSVKFVASDTVWATRWDKYLHIYDPQIQWFSLINFSVIVILLSSVVMHSLLRALKSDLARYNELNLDNEFHEDSGWKLGHGDVFRTPSKSMLLSILVGSGMQLFLMVMCSIFFAAVGLVSPVSRGSLPTVMFVLYALFGFVGSYASMGVYKFFRGPYWKANMILTPILLPGAIFLLIVIMNFFLLFAHSSGVIPARSLFFIILLWFLVSVPLSFAGSIVAHKQCNWDEHPTKTNQIARQIPYQPWYLRTAQATLIAGIFSFGSIAVELYFIYSSLWFNKIFYMFGFLLFSFLLLTLTTSLVTILITYYSLCLENWLWQWRSFIIGGLGCSIYTFIHSILFTKFKLGGVITVVLYLGYSLIISALCCVVTGAIGFFSSMFFIRKIYSAIKVE</sequence>
<feature type="signal peptide" evidence="1">
    <location>
        <begin position="1"/>
        <end position="18"/>
    </location>
</feature>
<feature type="chain" id="PRO_0000244444" description="Transmembrane 9 superfamily member 2">
    <location>
        <begin position="19"/>
        <end position="672"/>
    </location>
</feature>
<feature type="topological domain" description="Extracellular" evidence="1">
    <location>
        <begin position="19"/>
        <end position="307"/>
    </location>
</feature>
<feature type="transmembrane region" description="Helical" evidence="1">
    <location>
        <begin position="308"/>
        <end position="328"/>
    </location>
</feature>
<feature type="topological domain" description="Cytoplasmic" evidence="1">
    <location>
        <begin position="329"/>
        <end position="383"/>
    </location>
</feature>
<feature type="transmembrane region" description="Helical" evidence="1">
    <location>
        <begin position="384"/>
        <end position="404"/>
    </location>
</feature>
<feature type="topological domain" description="Extracellular" evidence="1">
    <location>
        <begin position="405"/>
        <end position="410"/>
    </location>
</feature>
<feature type="transmembrane region" description="Helical" evidence="1">
    <location>
        <begin position="411"/>
        <end position="431"/>
    </location>
</feature>
<feature type="topological domain" description="Cytoplasmic" evidence="1">
    <location>
        <begin position="432"/>
        <end position="447"/>
    </location>
</feature>
<feature type="transmembrane region" description="Helical" evidence="1">
    <location>
        <begin position="448"/>
        <end position="468"/>
    </location>
</feature>
<feature type="topological domain" description="Extracellular" evidence="1">
    <location>
        <begin position="469"/>
        <end position="479"/>
    </location>
</feature>
<feature type="transmembrane region" description="Helical" evidence="1">
    <location>
        <begin position="480"/>
        <end position="500"/>
    </location>
</feature>
<feature type="topological domain" description="Cytoplasmic" evidence="1">
    <location>
        <begin position="501"/>
        <end position="532"/>
    </location>
</feature>
<feature type="transmembrane region" description="Helical" evidence="1">
    <location>
        <begin position="533"/>
        <end position="553"/>
    </location>
</feature>
<feature type="topological domain" description="Extracellular" evidence="1">
    <location>
        <begin position="554"/>
        <end position="565"/>
    </location>
</feature>
<feature type="transmembrane region" description="Helical" evidence="1">
    <location>
        <begin position="566"/>
        <end position="586"/>
    </location>
</feature>
<feature type="topological domain" description="Cytoplasmic" evidence="1">
    <location>
        <begin position="587"/>
        <end position="601"/>
    </location>
</feature>
<feature type="transmembrane region" description="Helical" evidence="1">
    <location>
        <begin position="602"/>
        <end position="622"/>
    </location>
</feature>
<feature type="topological domain" description="Extracellular" evidence="1">
    <location>
        <begin position="623"/>
        <end position="628"/>
    </location>
</feature>
<feature type="transmembrane region" description="Helical" evidence="1">
    <location>
        <begin position="629"/>
        <end position="649"/>
    </location>
</feature>
<feature type="topological domain" description="Cytoplasmic" evidence="1">
    <location>
        <begin position="650"/>
        <end position="672"/>
    </location>
</feature>
<organism>
    <name type="scientific">Saccharomyces cerevisiae (strain ATCC 204508 / S288c)</name>
    <name type="common">Baker's yeast</name>
    <dbReference type="NCBI Taxonomy" id="559292"/>
    <lineage>
        <taxon>Eukaryota</taxon>
        <taxon>Fungi</taxon>
        <taxon>Dikarya</taxon>
        <taxon>Ascomycota</taxon>
        <taxon>Saccharomycotina</taxon>
        <taxon>Saccharomycetes</taxon>
        <taxon>Saccharomycetales</taxon>
        <taxon>Saccharomycetaceae</taxon>
        <taxon>Saccharomyces</taxon>
    </lineage>
</organism>